<proteinExistence type="inferred from homology"/>
<gene>
    <name evidence="1" type="primary">lipA</name>
    <name type="ordered locus">HSM_0186</name>
</gene>
<protein>
    <recommendedName>
        <fullName evidence="1">Lipoyl synthase</fullName>
        <ecNumber evidence="1">2.8.1.8</ecNumber>
    </recommendedName>
    <alternativeName>
        <fullName evidence="1">Lip-syn</fullName>
        <shortName evidence="1">LS</shortName>
    </alternativeName>
    <alternativeName>
        <fullName evidence="1">Lipoate synthase</fullName>
    </alternativeName>
    <alternativeName>
        <fullName evidence="1">Lipoic acid synthase</fullName>
    </alternativeName>
    <alternativeName>
        <fullName evidence="1">Sulfur insertion protein LipA</fullName>
    </alternativeName>
</protein>
<dbReference type="EC" id="2.8.1.8" evidence="1"/>
<dbReference type="EMBL" id="CP000947">
    <property type="protein sequence ID" value="ACA31649.1"/>
    <property type="molecule type" value="Genomic_DNA"/>
</dbReference>
<dbReference type="RefSeq" id="WP_012340950.1">
    <property type="nucleotide sequence ID" value="NC_010519.1"/>
</dbReference>
<dbReference type="SMR" id="B0UVP7"/>
<dbReference type="STRING" id="228400.HSM_0186"/>
<dbReference type="GeneID" id="31486464"/>
<dbReference type="KEGG" id="hsm:HSM_0186"/>
<dbReference type="HOGENOM" id="CLU_033144_2_1_6"/>
<dbReference type="UniPathway" id="UPA00538">
    <property type="reaction ID" value="UER00593"/>
</dbReference>
<dbReference type="GO" id="GO:0005737">
    <property type="term" value="C:cytoplasm"/>
    <property type="evidence" value="ECO:0007669"/>
    <property type="project" value="UniProtKB-SubCell"/>
</dbReference>
<dbReference type="GO" id="GO:0051539">
    <property type="term" value="F:4 iron, 4 sulfur cluster binding"/>
    <property type="evidence" value="ECO:0007669"/>
    <property type="project" value="UniProtKB-UniRule"/>
</dbReference>
<dbReference type="GO" id="GO:0016992">
    <property type="term" value="F:lipoate synthase activity"/>
    <property type="evidence" value="ECO:0007669"/>
    <property type="project" value="UniProtKB-UniRule"/>
</dbReference>
<dbReference type="GO" id="GO:0046872">
    <property type="term" value="F:metal ion binding"/>
    <property type="evidence" value="ECO:0007669"/>
    <property type="project" value="UniProtKB-KW"/>
</dbReference>
<dbReference type="CDD" id="cd01335">
    <property type="entry name" value="Radical_SAM"/>
    <property type="match status" value="1"/>
</dbReference>
<dbReference type="FunFam" id="3.20.20.70:FF:000023">
    <property type="entry name" value="Lipoyl synthase"/>
    <property type="match status" value="1"/>
</dbReference>
<dbReference type="Gene3D" id="3.20.20.70">
    <property type="entry name" value="Aldolase class I"/>
    <property type="match status" value="1"/>
</dbReference>
<dbReference type="HAMAP" id="MF_00206">
    <property type="entry name" value="Lipoyl_synth"/>
    <property type="match status" value="1"/>
</dbReference>
<dbReference type="InterPro" id="IPR013785">
    <property type="entry name" value="Aldolase_TIM"/>
</dbReference>
<dbReference type="InterPro" id="IPR006638">
    <property type="entry name" value="Elp3/MiaA/NifB-like_rSAM"/>
</dbReference>
<dbReference type="InterPro" id="IPR031691">
    <property type="entry name" value="LIAS_N"/>
</dbReference>
<dbReference type="InterPro" id="IPR003698">
    <property type="entry name" value="Lipoyl_synth"/>
</dbReference>
<dbReference type="InterPro" id="IPR007197">
    <property type="entry name" value="rSAM"/>
</dbReference>
<dbReference type="NCBIfam" id="TIGR00510">
    <property type="entry name" value="lipA"/>
    <property type="match status" value="1"/>
</dbReference>
<dbReference type="NCBIfam" id="NF004019">
    <property type="entry name" value="PRK05481.1"/>
    <property type="match status" value="1"/>
</dbReference>
<dbReference type="NCBIfam" id="NF009544">
    <property type="entry name" value="PRK12928.1"/>
    <property type="match status" value="1"/>
</dbReference>
<dbReference type="PANTHER" id="PTHR10949">
    <property type="entry name" value="LIPOYL SYNTHASE"/>
    <property type="match status" value="1"/>
</dbReference>
<dbReference type="PANTHER" id="PTHR10949:SF0">
    <property type="entry name" value="LIPOYL SYNTHASE, MITOCHONDRIAL"/>
    <property type="match status" value="1"/>
</dbReference>
<dbReference type="Pfam" id="PF16881">
    <property type="entry name" value="LIAS_N"/>
    <property type="match status" value="1"/>
</dbReference>
<dbReference type="Pfam" id="PF04055">
    <property type="entry name" value="Radical_SAM"/>
    <property type="match status" value="1"/>
</dbReference>
<dbReference type="PIRSF" id="PIRSF005963">
    <property type="entry name" value="Lipoyl_synth"/>
    <property type="match status" value="1"/>
</dbReference>
<dbReference type="SFLD" id="SFLDF00271">
    <property type="entry name" value="lipoyl_synthase"/>
    <property type="match status" value="1"/>
</dbReference>
<dbReference type="SFLD" id="SFLDS00029">
    <property type="entry name" value="Radical_SAM"/>
    <property type="match status" value="1"/>
</dbReference>
<dbReference type="SMART" id="SM00729">
    <property type="entry name" value="Elp3"/>
    <property type="match status" value="1"/>
</dbReference>
<dbReference type="SUPFAM" id="SSF102114">
    <property type="entry name" value="Radical SAM enzymes"/>
    <property type="match status" value="1"/>
</dbReference>
<dbReference type="PROSITE" id="PS51918">
    <property type="entry name" value="RADICAL_SAM"/>
    <property type="match status" value="1"/>
</dbReference>
<name>LIPA_HISS2</name>
<evidence type="ECO:0000255" key="1">
    <source>
        <dbReference type="HAMAP-Rule" id="MF_00206"/>
    </source>
</evidence>
<evidence type="ECO:0000255" key="2">
    <source>
        <dbReference type="PROSITE-ProRule" id="PRU01266"/>
    </source>
</evidence>
<sequence length="320" mass="36285">MTTPFKMERGVKYRDAAKTSIIPVKNIDPNQELLKKPEWMKIKLPANSAKINSIKNGMRRHGLHSVCEEASCPNLHECFNHGTATFMILGAICTRRCPFCDVAHGKPLPPDPDEPKKLAETIQDMKLRYVVITSVDRDDLPDRGAGHFAECVKEIRKLNPGIKIEILVPDFRGRIEQALEKLKDNPPDVFNHNLENVPRLYREIRPGADYNWSLKLLKEFKTIFPHIPTKSGIMVGLGETNEEILQVMQDLRDNGVTMLTLGQYLQPSRHHLPVARYVPPEEFDDFRDKAEKMGFEHAACGPFVRSSYHADLQASGGLVK</sequence>
<feature type="chain" id="PRO_1000077959" description="Lipoyl synthase">
    <location>
        <begin position="1"/>
        <end position="320"/>
    </location>
</feature>
<feature type="domain" description="Radical SAM core" evidence="2">
    <location>
        <begin position="79"/>
        <end position="296"/>
    </location>
</feature>
<feature type="binding site" evidence="1">
    <location>
        <position position="67"/>
    </location>
    <ligand>
        <name>[4Fe-4S] cluster</name>
        <dbReference type="ChEBI" id="CHEBI:49883"/>
        <label>1</label>
    </ligand>
</feature>
<feature type="binding site" evidence="1">
    <location>
        <position position="72"/>
    </location>
    <ligand>
        <name>[4Fe-4S] cluster</name>
        <dbReference type="ChEBI" id="CHEBI:49883"/>
        <label>1</label>
    </ligand>
</feature>
<feature type="binding site" evidence="1">
    <location>
        <position position="78"/>
    </location>
    <ligand>
        <name>[4Fe-4S] cluster</name>
        <dbReference type="ChEBI" id="CHEBI:49883"/>
        <label>1</label>
    </ligand>
</feature>
<feature type="binding site" evidence="1">
    <location>
        <position position="93"/>
    </location>
    <ligand>
        <name>[4Fe-4S] cluster</name>
        <dbReference type="ChEBI" id="CHEBI:49883"/>
        <label>2</label>
        <note>4Fe-4S-S-AdoMet</note>
    </ligand>
</feature>
<feature type="binding site" evidence="1">
    <location>
        <position position="97"/>
    </location>
    <ligand>
        <name>[4Fe-4S] cluster</name>
        <dbReference type="ChEBI" id="CHEBI:49883"/>
        <label>2</label>
        <note>4Fe-4S-S-AdoMet</note>
    </ligand>
</feature>
<feature type="binding site" evidence="1">
    <location>
        <position position="100"/>
    </location>
    <ligand>
        <name>[4Fe-4S] cluster</name>
        <dbReference type="ChEBI" id="CHEBI:49883"/>
        <label>2</label>
        <note>4Fe-4S-S-AdoMet</note>
    </ligand>
</feature>
<feature type="binding site" evidence="1">
    <location>
        <position position="307"/>
    </location>
    <ligand>
        <name>[4Fe-4S] cluster</name>
        <dbReference type="ChEBI" id="CHEBI:49883"/>
        <label>1</label>
    </ligand>
</feature>
<comment type="function">
    <text evidence="1">Catalyzes the radical-mediated insertion of two sulfur atoms into the C-6 and C-8 positions of the octanoyl moiety bound to the lipoyl domains of lipoate-dependent enzymes, thereby converting the octanoylated domains into lipoylated derivatives.</text>
</comment>
<comment type="catalytic activity">
    <reaction evidence="1">
        <text>[[Fe-S] cluster scaffold protein carrying a second [4Fe-4S](2+) cluster] + N(6)-octanoyl-L-lysyl-[protein] + 2 oxidized [2Fe-2S]-[ferredoxin] + 2 S-adenosyl-L-methionine + 4 H(+) = [[Fe-S] cluster scaffold protein] + N(6)-[(R)-dihydrolipoyl]-L-lysyl-[protein] + 4 Fe(3+) + 2 hydrogen sulfide + 2 5'-deoxyadenosine + 2 L-methionine + 2 reduced [2Fe-2S]-[ferredoxin]</text>
        <dbReference type="Rhea" id="RHEA:16585"/>
        <dbReference type="Rhea" id="RHEA-COMP:9928"/>
        <dbReference type="Rhea" id="RHEA-COMP:10000"/>
        <dbReference type="Rhea" id="RHEA-COMP:10001"/>
        <dbReference type="Rhea" id="RHEA-COMP:10475"/>
        <dbReference type="Rhea" id="RHEA-COMP:14568"/>
        <dbReference type="Rhea" id="RHEA-COMP:14569"/>
        <dbReference type="ChEBI" id="CHEBI:15378"/>
        <dbReference type="ChEBI" id="CHEBI:17319"/>
        <dbReference type="ChEBI" id="CHEBI:29034"/>
        <dbReference type="ChEBI" id="CHEBI:29919"/>
        <dbReference type="ChEBI" id="CHEBI:33722"/>
        <dbReference type="ChEBI" id="CHEBI:33737"/>
        <dbReference type="ChEBI" id="CHEBI:33738"/>
        <dbReference type="ChEBI" id="CHEBI:57844"/>
        <dbReference type="ChEBI" id="CHEBI:59789"/>
        <dbReference type="ChEBI" id="CHEBI:78809"/>
        <dbReference type="ChEBI" id="CHEBI:83100"/>
        <dbReference type="EC" id="2.8.1.8"/>
    </reaction>
</comment>
<comment type="cofactor">
    <cofactor evidence="1">
        <name>[4Fe-4S] cluster</name>
        <dbReference type="ChEBI" id="CHEBI:49883"/>
    </cofactor>
    <text evidence="1">Binds 2 [4Fe-4S] clusters per subunit. One cluster is coordinated with 3 cysteines and an exchangeable S-adenosyl-L-methionine.</text>
</comment>
<comment type="pathway">
    <text evidence="1">Protein modification; protein lipoylation via endogenous pathway; protein N(6)-(lipoyl)lysine from octanoyl-[acyl-carrier-protein]: step 2/2.</text>
</comment>
<comment type="subcellular location">
    <subcellularLocation>
        <location evidence="1">Cytoplasm</location>
    </subcellularLocation>
</comment>
<comment type="similarity">
    <text evidence="1">Belongs to the radical SAM superfamily. Lipoyl synthase family.</text>
</comment>
<organism>
    <name type="scientific">Histophilus somni (strain 2336)</name>
    <name type="common">Haemophilus somnus</name>
    <dbReference type="NCBI Taxonomy" id="228400"/>
    <lineage>
        <taxon>Bacteria</taxon>
        <taxon>Pseudomonadati</taxon>
        <taxon>Pseudomonadota</taxon>
        <taxon>Gammaproteobacteria</taxon>
        <taxon>Pasteurellales</taxon>
        <taxon>Pasteurellaceae</taxon>
        <taxon>Histophilus</taxon>
    </lineage>
</organism>
<reference key="1">
    <citation type="submission" date="2008-02" db="EMBL/GenBank/DDBJ databases">
        <title>Complete sequence of Haemophilus somnus 2336.</title>
        <authorList>
            <consortium name="US DOE Joint Genome Institute"/>
            <person name="Siddaramappa S."/>
            <person name="Duncan A.J."/>
            <person name="Challacombe J.F."/>
            <person name="Rainey D."/>
            <person name="Gillaspy A.F."/>
            <person name="Carson M."/>
            <person name="Gipson J."/>
            <person name="Gipson M."/>
            <person name="Bruce D."/>
            <person name="Detter J.C."/>
            <person name="Han C.S."/>
            <person name="Land M."/>
            <person name="Tapia R."/>
            <person name="Thompson L.S."/>
            <person name="Orvis J."/>
            <person name="Zaitshik J."/>
            <person name="Barnes G."/>
            <person name="Brettin T.S."/>
            <person name="Dyer D.W."/>
            <person name="Inzana T.J."/>
        </authorList>
    </citation>
    <scope>NUCLEOTIDE SEQUENCE [LARGE SCALE GENOMIC DNA]</scope>
    <source>
        <strain>2336</strain>
    </source>
</reference>
<accession>B0UVP7</accession>
<keyword id="KW-0004">4Fe-4S</keyword>
<keyword id="KW-0963">Cytoplasm</keyword>
<keyword id="KW-0408">Iron</keyword>
<keyword id="KW-0411">Iron-sulfur</keyword>
<keyword id="KW-0479">Metal-binding</keyword>
<keyword id="KW-0949">S-adenosyl-L-methionine</keyword>
<keyword id="KW-0808">Transferase</keyword>